<protein>
    <recommendedName>
        <fullName evidence="1">Glutamate racemase</fullName>
        <ecNumber evidence="1">5.1.1.3</ecNumber>
    </recommendedName>
</protein>
<feature type="chain" id="PRO_0000095511" description="Glutamate racemase">
    <location>
        <begin position="1"/>
        <end position="266"/>
    </location>
</feature>
<feature type="active site" description="Proton donor/acceptor" evidence="1">
    <location>
        <position position="72"/>
    </location>
</feature>
<feature type="active site" description="Proton donor/acceptor" evidence="1">
    <location>
        <position position="184"/>
    </location>
</feature>
<feature type="binding site" evidence="1">
    <location>
        <begin position="9"/>
        <end position="10"/>
    </location>
    <ligand>
        <name>substrate</name>
    </ligand>
</feature>
<feature type="binding site" evidence="1">
    <location>
        <begin position="41"/>
        <end position="42"/>
    </location>
    <ligand>
        <name>substrate</name>
    </ligand>
</feature>
<feature type="binding site" evidence="1">
    <location>
        <begin position="73"/>
        <end position="74"/>
    </location>
    <ligand>
        <name>substrate</name>
    </ligand>
</feature>
<feature type="binding site" evidence="1">
    <location>
        <begin position="185"/>
        <end position="186"/>
    </location>
    <ligand>
        <name>substrate</name>
    </ligand>
</feature>
<evidence type="ECO:0000255" key="1">
    <source>
        <dbReference type="HAMAP-Rule" id="MF_00258"/>
    </source>
</evidence>
<gene>
    <name evidence="1" type="primary">murI</name>
    <name type="ordered locus">SAS1084</name>
</gene>
<comment type="function">
    <text evidence="1">Provides the (R)-glutamate required for cell wall biosynthesis.</text>
</comment>
<comment type="catalytic activity">
    <reaction evidence="1">
        <text>L-glutamate = D-glutamate</text>
        <dbReference type="Rhea" id="RHEA:12813"/>
        <dbReference type="ChEBI" id="CHEBI:29985"/>
        <dbReference type="ChEBI" id="CHEBI:29986"/>
        <dbReference type="EC" id="5.1.1.3"/>
    </reaction>
</comment>
<comment type="pathway">
    <text evidence="1">Cell wall biogenesis; peptidoglycan biosynthesis.</text>
</comment>
<comment type="similarity">
    <text evidence="1">Belongs to the aspartate/glutamate racemases family.</text>
</comment>
<accession>Q6GA64</accession>
<organism>
    <name type="scientific">Staphylococcus aureus (strain MSSA476)</name>
    <dbReference type="NCBI Taxonomy" id="282459"/>
    <lineage>
        <taxon>Bacteria</taxon>
        <taxon>Bacillati</taxon>
        <taxon>Bacillota</taxon>
        <taxon>Bacilli</taxon>
        <taxon>Bacillales</taxon>
        <taxon>Staphylococcaceae</taxon>
        <taxon>Staphylococcus</taxon>
    </lineage>
</organism>
<proteinExistence type="inferred from homology"/>
<dbReference type="EC" id="5.1.1.3" evidence="1"/>
<dbReference type="EMBL" id="BX571857">
    <property type="protein sequence ID" value="CAG42859.1"/>
    <property type="molecule type" value="Genomic_DNA"/>
</dbReference>
<dbReference type="SMR" id="Q6GA64"/>
<dbReference type="KEGG" id="sas:SAS1084"/>
<dbReference type="HOGENOM" id="CLU_052344_0_2_9"/>
<dbReference type="UniPathway" id="UPA00219"/>
<dbReference type="GO" id="GO:0008881">
    <property type="term" value="F:glutamate racemase activity"/>
    <property type="evidence" value="ECO:0007669"/>
    <property type="project" value="UniProtKB-UniRule"/>
</dbReference>
<dbReference type="GO" id="GO:0071555">
    <property type="term" value="P:cell wall organization"/>
    <property type="evidence" value="ECO:0007669"/>
    <property type="project" value="UniProtKB-KW"/>
</dbReference>
<dbReference type="GO" id="GO:0009252">
    <property type="term" value="P:peptidoglycan biosynthetic process"/>
    <property type="evidence" value="ECO:0007669"/>
    <property type="project" value="UniProtKB-UniRule"/>
</dbReference>
<dbReference type="GO" id="GO:0008360">
    <property type="term" value="P:regulation of cell shape"/>
    <property type="evidence" value="ECO:0007669"/>
    <property type="project" value="UniProtKB-KW"/>
</dbReference>
<dbReference type="FunFam" id="3.40.50.1860:FF:000002">
    <property type="entry name" value="Glutamate racemase"/>
    <property type="match status" value="1"/>
</dbReference>
<dbReference type="Gene3D" id="3.40.50.1860">
    <property type="match status" value="2"/>
</dbReference>
<dbReference type="HAMAP" id="MF_00258">
    <property type="entry name" value="Glu_racemase"/>
    <property type="match status" value="1"/>
</dbReference>
<dbReference type="InterPro" id="IPR015942">
    <property type="entry name" value="Asp/Glu/hydantoin_racemase"/>
</dbReference>
<dbReference type="InterPro" id="IPR001920">
    <property type="entry name" value="Asp/Glu_race"/>
</dbReference>
<dbReference type="InterPro" id="IPR018187">
    <property type="entry name" value="Asp/Glu_racemase_AS_1"/>
</dbReference>
<dbReference type="InterPro" id="IPR033134">
    <property type="entry name" value="Asp/Glu_racemase_AS_2"/>
</dbReference>
<dbReference type="InterPro" id="IPR004391">
    <property type="entry name" value="Glu_race"/>
</dbReference>
<dbReference type="NCBIfam" id="TIGR00067">
    <property type="entry name" value="glut_race"/>
    <property type="match status" value="1"/>
</dbReference>
<dbReference type="NCBIfam" id="NF002035">
    <property type="entry name" value="PRK00865.1-3"/>
    <property type="match status" value="1"/>
</dbReference>
<dbReference type="PANTHER" id="PTHR21198">
    <property type="entry name" value="GLUTAMATE RACEMASE"/>
    <property type="match status" value="1"/>
</dbReference>
<dbReference type="PANTHER" id="PTHR21198:SF2">
    <property type="entry name" value="GLUTAMATE RACEMASE"/>
    <property type="match status" value="1"/>
</dbReference>
<dbReference type="Pfam" id="PF01177">
    <property type="entry name" value="Asp_Glu_race"/>
    <property type="match status" value="1"/>
</dbReference>
<dbReference type="SUPFAM" id="SSF53681">
    <property type="entry name" value="Aspartate/glutamate racemase"/>
    <property type="match status" value="2"/>
</dbReference>
<dbReference type="PROSITE" id="PS00923">
    <property type="entry name" value="ASP_GLU_RACEMASE_1"/>
    <property type="match status" value="1"/>
</dbReference>
<dbReference type="PROSITE" id="PS00924">
    <property type="entry name" value="ASP_GLU_RACEMASE_2"/>
    <property type="match status" value="1"/>
</dbReference>
<keyword id="KW-0133">Cell shape</keyword>
<keyword id="KW-0961">Cell wall biogenesis/degradation</keyword>
<keyword id="KW-0413">Isomerase</keyword>
<keyword id="KW-0573">Peptidoglycan synthesis</keyword>
<name>MURI_STAAS</name>
<reference key="1">
    <citation type="journal article" date="2004" name="Proc. Natl. Acad. Sci. U.S.A.">
        <title>Complete genomes of two clinical Staphylococcus aureus strains: evidence for the rapid evolution of virulence and drug resistance.</title>
        <authorList>
            <person name="Holden M.T.G."/>
            <person name="Feil E.J."/>
            <person name="Lindsay J.A."/>
            <person name="Peacock S.J."/>
            <person name="Day N.P.J."/>
            <person name="Enright M.C."/>
            <person name="Foster T.J."/>
            <person name="Moore C.E."/>
            <person name="Hurst L."/>
            <person name="Atkin R."/>
            <person name="Barron A."/>
            <person name="Bason N."/>
            <person name="Bentley S.D."/>
            <person name="Chillingworth C."/>
            <person name="Chillingworth T."/>
            <person name="Churcher C."/>
            <person name="Clark L."/>
            <person name="Corton C."/>
            <person name="Cronin A."/>
            <person name="Doggett J."/>
            <person name="Dowd L."/>
            <person name="Feltwell T."/>
            <person name="Hance Z."/>
            <person name="Harris B."/>
            <person name="Hauser H."/>
            <person name="Holroyd S."/>
            <person name="Jagels K."/>
            <person name="James K.D."/>
            <person name="Lennard N."/>
            <person name="Line A."/>
            <person name="Mayes R."/>
            <person name="Moule S."/>
            <person name="Mungall K."/>
            <person name="Ormond D."/>
            <person name="Quail M.A."/>
            <person name="Rabbinowitsch E."/>
            <person name="Rutherford K.M."/>
            <person name="Sanders M."/>
            <person name="Sharp S."/>
            <person name="Simmonds M."/>
            <person name="Stevens K."/>
            <person name="Whitehead S."/>
            <person name="Barrell B.G."/>
            <person name="Spratt B.G."/>
            <person name="Parkhill J."/>
        </authorList>
    </citation>
    <scope>NUCLEOTIDE SEQUENCE [LARGE SCALE GENOMIC DNA]</scope>
    <source>
        <strain>MSSA476</strain>
    </source>
</reference>
<sequence length="266" mass="29698">MNKPIGVIDSGVGGLTVAKEIMRQLPNETIYYLGDIGRCPYGPRPGEQVKQYTVEIARKLMEFDIKMLVIACNTATAVALEYLQKTLSIPVIGVIEPGARTAIMTTRNQNVLVLGTEGTIKSEAYRTHIKRINPHVEVHGVACPGFVPLVEQMRYSDPTITSIVIHQTLKRWRNSESDTVILGCTHYPLLYKPIYDYFGGKKTVISSGLETAREVSALLTFSNEHASYTEHPDHRFFATGDPTHITNIIKEWLNLSVNVERISVND</sequence>